<gene>
    <name evidence="10 13" type="primary">STARD3NL</name>
    <name evidence="9" type="synonym">MENTHO</name>
    <name type="ORF">UNQ855/PRO1864</name>
</gene>
<reference key="1">
    <citation type="journal article" date="2002" name="J. Biol. Chem.">
        <title>MENTHO, a MLN64 homologue devoid of the START domain.</title>
        <authorList>
            <person name="Alpy F."/>
            <person name="Wendling C."/>
            <person name="Rio M.-C."/>
            <person name="Tomasetto C."/>
        </authorList>
    </citation>
    <scope>NUCLEOTIDE SEQUENCE [MRNA]</scope>
    <scope>TOPOLOGY</scope>
    <scope>PHOSPHORYLATION</scope>
    <scope>ALTERNATIVE INITIATION</scope>
    <source>
        <tissue>Fetal brain</tissue>
    </source>
</reference>
<reference key="2">
    <citation type="journal article" date="2003" name="Genome Res.">
        <title>The secreted protein discovery initiative (SPDI), a large-scale effort to identify novel human secreted and transmembrane proteins: a bioinformatics assessment.</title>
        <authorList>
            <person name="Clark H.F."/>
            <person name="Gurney A.L."/>
            <person name="Abaya E."/>
            <person name="Baker K."/>
            <person name="Baldwin D.T."/>
            <person name="Brush J."/>
            <person name="Chen J."/>
            <person name="Chow B."/>
            <person name="Chui C."/>
            <person name="Crowley C."/>
            <person name="Currell B."/>
            <person name="Deuel B."/>
            <person name="Dowd P."/>
            <person name="Eaton D."/>
            <person name="Foster J.S."/>
            <person name="Grimaldi C."/>
            <person name="Gu Q."/>
            <person name="Hass P.E."/>
            <person name="Heldens S."/>
            <person name="Huang A."/>
            <person name="Kim H.S."/>
            <person name="Klimowski L."/>
            <person name="Jin Y."/>
            <person name="Johnson S."/>
            <person name="Lee J."/>
            <person name="Lewis L."/>
            <person name="Liao D."/>
            <person name="Mark M.R."/>
            <person name="Robbie E."/>
            <person name="Sanchez C."/>
            <person name="Schoenfeld J."/>
            <person name="Seshagiri S."/>
            <person name="Simmons L."/>
            <person name="Singh J."/>
            <person name="Smith V."/>
            <person name="Stinson J."/>
            <person name="Vagts A."/>
            <person name="Vandlen R.L."/>
            <person name="Watanabe C."/>
            <person name="Wieand D."/>
            <person name="Woods K."/>
            <person name="Xie M.-H."/>
            <person name="Yansura D.G."/>
            <person name="Yi S."/>
            <person name="Yu G."/>
            <person name="Yuan J."/>
            <person name="Zhang M."/>
            <person name="Zhang Z."/>
            <person name="Goddard A.D."/>
            <person name="Wood W.I."/>
            <person name="Godowski P.J."/>
            <person name="Gray A.M."/>
        </authorList>
    </citation>
    <scope>NUCLEOTIDE SEQUENCE [LARGE SCALE MRNA]</scope>
</reference>
<reference key="3">
    <citation type="journal article" date="2004" name="Nat. Genet.">
        <title>Complete sequencing and characterization of 21,243 full-length human cDNAs.</title>
        <authorList>
            <person name="Ota T."/>
            <person name="Suzuki Y."/>
            <person name="Nishikawa T."/>
            <person name="Otsuki T."/>
            <person name="Sugiyama T."/>
            <person name="Irie R."/>
            <person name="Wakamatsu A."/>
            <person name="Hayashi K."/>
            <person name="Sato H."/>
            <person name="Nagai K."/>
            <person name="Kimura K."/>
            <person name="Makita H."/>
            <person name="Sekine M."/>
            <person name="Obayashi M."/>
            <person name="Nishi T."/>
            <person name="Shibahara T."/>
            <person name="Tanaka T."/>
            <person name="Ishii S."/>
            <person name="Yamamoto J."/>
            <person name="Saito K."/>
            <person name="Kawai Y."/>
            <person name="Isono Y."/>
            <person name="Nakamura Y."/>
            <person name="Nagahari K."/>
            <person name="Murakami K."/>
            <person name="Yasuda T."/>
            <person name="Iwayanagi T."/>
            <person name="Wagatsuma M."/>
            <person name="Shiratori A."/>
            <person name="Sudo H."/>
            <person name="Hosoiri T."/>
            <person name="Kaku Y."/>
            <person name="Kodaira H."/>
            <person name="Kondo H."/>
            <person name="Sugawara M."/>
            <person name="Takahashi M."/>
            <person name="Kanda K."/>
            <person name="Yokoi T."/>
            <person name="Furuya T."/>
            <person name="Kikkawa E."/>
            <person name="Omura Y."/>
            <person name="Abe K."/>
            <person name="Kamihara K."/>
            <person name="Katsuta N."/>
            <person name="Sato K."/>
            <person name="Tanikawa M."/>
            <person name="Yamazaki M."/>
            <person name="Ninomiya K."/>
            <person name="Ishibashi T."/>
            <person name="Yamashita H."/>
            <person name="Murakawa K."/>
            <person name="Fujimori K."/>
            <person name="Tanai H."/>
            <person name="Kimata M."/>
            <person name="Watanabe M."/>
            <person name="Hiraoka S."/>
            <person name="Chiba Y."/>
            <person name="Ishida S."/>
            <person name="Ono Y."/>
            <person name="Takiguchi S."/>
            <person name="Watanabe S."/>
            <person name="Yosida M."/>
            <person name="Hotuta T."/>
            <person name="Kusano J."/>
            <person name="Kanehori K."/>
            <person name="Takahashi-Fujii A."/>
            <person name="Hara H."/>
            <person name="Tanase T.-O."/>
            <person name="Nomura Y."/>
            <person name="Togiya S."/>
            <person name="Komai F."/>
            <person name="Hara R."/>
            <person name="Takeuchi K."/>
            <person name="Arita M."/>
            <person name="Imose N."/>
            <person name="Musashino K."/>
            <person name="Yuuki H."/>
            <person name="Oshima A."/>
            <person name="Sasaki N."/>
            <person name="Aotsuka S."/>
            <person name="Yoshikawa Y."/>
            <person name="Matsunawa H."/>
            <person name="Ichihara T."/>
            <person name="Shiohata N."/>
            <person name="Sano S."/>
            <person name="Moriya S."/>
            <person name="Momiyama H."/>
            <person name="Satoh N."/>
            <person name="Takami S."/>
            <person name="Terashima Y."/>
            <person name="Suzuki O."/>
            <person name="Nakagawa S."/>
            <person name="Senoh A."/>
            <person name="Mizoguchi H."/>
            <person name="Goto Y."/>
            <person name="Shimizu F."/>
            <person name="Wakebe H."/>
            <person name="Hishigaki H."/>
            <person name="Watanabe T."/>
            <person name="Sugiyama A."/>
            <person name="Takemoto M."/>
            <person name="Kawakami B."/>
            <person name="Yamazaki M."/>
            <person name="Watanabe K."/>
            <person name="Kumagai A."/>
            <person name="Itakura S."/>
            <person name="Fukuzumi Y."/>
            <person name="Fujimori Y."/>
            <person name="Komiyama M."/>
            <person name="Tashiro H."/>
            <person name="Tanigami A."/>
            <person name="Fujiwara T."/>
            <person name="Ono T."/>
            <person name="Yamada K."/>
            <person name="Fujii Y."/>
            <person name="Ozaki K."/>
            <person name="Hirao M."/>
            <person name="Ohmori Y."/>
            <person name="Kawabata A."/>
            <person name="Hikiji T."/>
            <person name="Kobatake N."/>
            <person name="Inagaki H."/>
            <person name="Ikema Y."/>
            <person name="Okamoto S."/>
            <person name="Okitani R."/>
            <person name="Kawakami T."/>
            <person name="Noguchi S."/>
            <person name="Itoh T."/>
            <person name="Shigeta K."/>
            <person name="Senba T."/>
            <person name="Matsumura K."/>
            <person name="Nakajima Y."/>
            <person name="Mizuno T."/>
            <person name="Morinaga M."/>
            <person name="Sasaki M."/>
            <person name="Togashi T."/>
            <person name="Oyama M."/>
            <person name="Hata H."/>
            <person name="Watanabe M."/>
            <person name="Komatsu T."/>
            <person name="Mizushima-Sugano J."/>
            <person name="Satoh T."/>
            <person name="Shirai Y."/>
            <person name="Takahashi Y."/>
            <person name="Nakagawa K."/>
            <person name="Okumura K."/>
            <person name="Nagase T."/>
            <person name="Nomura N."/>
            <person name="Kikuchi H."/>
            <person name="Masuho Y."/>
            <person name="Yamashita R."/>
            <person name="Nakai K."/>
            <person name="Yada T."/>
            <person name="Nakamura Y."/>
            <person name="Ohara O."/>
            <person name="Isogai T."/>
            <person name="Sugano S."/>
        </authorList>
    </citation>
    <scope>NUCLEOTIDE SEQUENCE [LARGE SCALE MRNA]</scope>
    <source>
        <tissue>Colon</tissue>
    </source>
</reference>
<reference key="4">
    <citation type="journal article" date="2003" name="Nature">
        <title>The DNA sequence of human chromosome 7.</title>
        <authorList>
            <person name="Hillier L.W."/>
            <person name="Fulton R.S."/>
            <person name="Fulton L.A."/>
            <person name="Graves T.A."/>
            <person name="Pepin K.H."/>
            <person name="Wagner-McPherson C."/>
            <person name="Layman D."/>
            <person name="Maas J."/>
            <person name="Jaeger S."/>
            <person name="Walker R."/>
            <person name="Wylie K."/>
            <person name="Sekhon M."/>
            <person name="Becker M.C."/>
            <person name="O'Laughlin M.D."/>
            <person name="Schaller M.E."/>
            <person name="Fewell G.A."/>
            <person name="Delehaunty K.D."/>
            <person name="Miner T.L."/>
            <person name="Nash W.E."/>
            <person name="Cordes M."/>
            <person name="Du H."/>
            <person name="Sun H."/>
            <person name="Edwards J."/>
            <person name="Bradshaw-Cordum H."/>
            <person name="Ali J."/>
            <person name="Andrews S."/>
            <person name="Isak A."/>
            <person name="Vanbrunt A."/>
            <person name="Nguyen C."/>
            <person name="Du F."/>
            <person name="Lamar B."/>
            <person name="Courtney L."/>
            <person name="Kalicki J."/>
            <person name="Ozersky P."/>
            <person name="Bielicki L."/>
            <person name="Scott K."/>
            <person name="Holmes A."/>
            <person name="Harkins R."/>
            <person name="Harris A."/>
            <person name="Strong C.M."/>
            <person name="Hou S."/>
            <person name="Tomlinson C."/>
            <person name="Dauphin-Kohlberg S."/>
            <person name="Kozlowicz-Reilly A."/>
            <person name="Leonard S."/>
            <person name="Rohlfing T."/>
            <person name="Rock S.M."/>
            <person name="Tin-Wollam A.-M."/>
            <person name="Abbott A."/>
            <person name="Minx P."/>
            <person name="Maupin R."/>
            <person name="Strowmatt C."/>
            <person name="Latreille P."/>
            <person name="Miller N."/>
            <person name="Johnson D."/>
            <person name="Murray J."/>
            <person name="Woessner J.P."/>
            <person name="Wendl M.C."/>
            <person name="Yang S.-P."/>
            <person name="Schultz B.R."/>
            <person name="Wallis J.W."/>
            <person name="Spieth J."/>
            <person name="Bieri T.A."/>
            <person name="Nelson J.O."/>
            <person name="Berkowicz N."/>
            <person name="Wohldmann P.E."/>
            <person name="Cook L.L."/>
            <person name="Hickenbotham M.T."/>
            <person name="Eldred J."/>
            <person name="Williams D."/>
            <person name="Bedell J.A."/>
            <person name="Mardis E.R."/>
            <person name="Clifton S.W."/>
            <person name="Chissoe S.L."/>
            <person name="Marra M.A."/>
            <person name="Raymond C."/>
            <person name="Haugen E."/>
            <person name="Gillett W."/>
            <person name="Zhou Y."/>
            <person name="James R."/>
            <person name="Phelps K."/>
            <person name="Iadanoto S."/>
            <person name="Bubb K."/>
            <person name="Simms E."/>
            <person name="Levy R."/>
            <person name="Clendenning J."/>
            <person name="Kaul R."/>
            <person name="Kent W.J."/>
            <person name="Furey T.S."/>
            <person name="Baertsch R.A."/>
            <person name="Brent M.R."/>
            <person name="Keibler E."/>
            <person name="Flicek P."/>
            <person name="Bork P."/>
            <person name="Suyama M."/>
            <person name="Bailey J.A."/>
            <person name="Portnoy M.E."/>
            <person name="Torrents D."/>
            <person name="Chinwalla A.T."/>
            <person name="Gish W.R."/>
            <person name="Eddy S.R."/>
            <person name="McPherson J.D."/>
            <person name="Olson M.V."/>
            <person name="Eichler E.E."/>
            <person name="Green E.D."/>
            <person name="Waterston R.H."/>
            <person name="Wilson R.K."/>
        </authorList>
    </citation>
    <scope>NUCLEOTIDE SEQUENCE [LARGE SCALE GENOMIC DNA]</scope>
</reference>
<reference key="5">
    <citation type="journal article" date="2003" name="Science">
        <title>Human chromosome 7: DNA sequence and biology.</title>
        <authorList>
            <person name="Scherer S.W."/>
            <person name="Cheung J."/>
            <person name="MacDonald J.R."/>
            <person name="Osborne L.R."/>
            <person name="Nakabayashi K."/>
            <person name="Herbrick J.-A."/>
            <person name="Carson A.R."/>
            <person name="Parker-Katiraee L."/>
            <person name="Skaug J."/>
            <person name="Khaja R."/>
            <person name="Zhang J."/>
            <person name="Hudek A.K."/>
            <person name="Li M."/>
            <person name="Haddad M."/>
            <person name="Duggan G.E."/>
            <person name="Fernandez B.A."/>
            <person name="Kanematsu E."/>
            <person name="Gentles S."/>
            <person name="Christopoulos C.C."/>
            <person name="Choufani S."/>
            <person name="Kwasnicka D."/>
            <person name="Zheng X.H."/>
            <person name="Lai Z."/>
            <person name="Nusskern D.R."/>
            <person name="Zhang Q."/>
            <person name="Gu Z."/>
            <person name="Lu F."/>
            <person name="Zeesman S."/>
            <person name="Nowaczyk M.J."/>
            <person name="Teshima I."/>
            <person name="Chitayat D."/>
            <person name="Shuman C."/>
            <person name="Weksberg R."/>
            <person name="Zackai E.H."/>
            <person name="Grebe T.A."/>
            <person name="Cox S.R."/>
            <person name="Kirkpatrick S.J."/>
            <person name="Rahman N."/>
            <person name="Friedman J.M."/>
            <person name="Heng H.H.Q."/>
            <person name="Pelicci P.G."/>
            <person name="Lo-Coco F."/>
            <person name="Belloni E."/>
            <person name="Shaffer L.G."/>
            <person name="Pober B."/>
            <person name="Morton C.C."/>
            <person name="Gusella J.F."/>
            <person name="Bruns G.A.P."/>
            <person name="Korf B.R."/>
            <person name="Quade B.J."/>
            <person name="Ligon A.H."/>
            <person name="Ferguson H."/>
            <person name="Higgins A.W."/>
            <person name="Leach N.T."/>
            <person name="Herrick S.R."/>
            <person name="Lemyre E."/>
            <person name="Farra C.G."/>
            <person name="Kim H.-G."/>
            <person name="Summers A.M."/>
            <person name="Gripp K.W."/>
            <person name="Roberts W."/>
            <person name="Szatmari P."/>
            <person name="Winsor E.J.T."/>
            <person name="Grzeschik K.-H."/>
            <person name="Teebi A."/>
            <person name="Minassian B.A."/>
            <person name="Kere J."/>
            <person name="Armengol L."/>
            <person name="Pujana M.A."/>
            <person name="Estivill X."/>
            <person name="Wilson M.D."/>
            <person name="Koop B.F."/>
            <person name="Tosi S."/>
            <person name="Moore G.E."/>
            <person name="Boright A.P."/>
            <person name="Zlotorynski E."/>
            <person name="Kerem B."/>
            <person name="Kroisel P.M."/>
            <person name="Petek E."/>
            <person name="Oscier D.G."/>
            <person name="Mould S.J."/>
            <person name="Doehner H."/>
            <person name="Doehner K."/>
            <person name="Rommens J.M."/>
            <person name="Vincent J.B."/>
            <person name="Venter J.C."/>
            <person name="Li P.W."/>
            <person name="Mural R.J."/>
            <person name="Adams M.D."/>
            <person name="Tsui L.-C."/>
        </authorList>
    </citation>
    <scope>NUCLEOTIDE SEQUENCE [LARGE SCALE GENOMIC DNA]</scope>
</reference>
<reference key="6">
    <citation type="submission" date="2005-07" db="EMBL/GenBank/DDBJ databases">
        <authorList>
            <person name="Mural R.J."/>
            <person name="Istrail S."/>
            <person name="Sutton G."/>
            <person name="Florea L."/>
            <person name="Halpern A.L."/>
            <person name="Mobarry C.M."/>
            <person name="Lippert R."/>
            <person name="Walenz B."/>
            <person name="Shatkay H."/>
            <person name="Dew I."/>
            <person name="Miller J.R."/>
            <person name="Flanigan M.J."/>
            <person name="Edwards N.J."/>
            <person name="Bolanos R."/>
            <person name="Fasulo D."/>
            <person name="Halldorsson B.V."/>
            <person name="Hannenhalli S."/>
            <person name="Turner R."/>
            <person name="Yooseph S."/>
            <person name="Lu F."/>
            <person name="Nusskern D.R."/>
            <person name="Shue B.C."/>
            <person name="Zheng X.H."/>
            <person name="Zhong F."/>
            <person name="Delcher A.L."/>
            <person name="Huson D.H."/>
            <person name="Kravitz S.A."/>
            <person name="Mouchard L."/>
            <person name="Reinert K."/>
            <person name="Remington K.A."/>
            <person name="Clark A.G."/>
            <person name="Waterman M.S."/>
            <person name="Eichler E.E."/>
            <person name="Adams M.D."/>
            <person name="Hunkapiller M.W."/>
            <person name="Myers E.W."/>
            <person name="Venter J.C."/>
        </authorList>
    </citation>
    <scope>NUCLEOTIDE SEQUENCE [LARGE SCALE GENOMIC DNA]</scope>
</reference>
<reference key="7">
    <citation type="journal article" date="2004" name="Genome Res.">
        <title>The status, quality, and expansion of the NIH full-length cDNA project: the Mammalian Gene Collection (MGC).</title>
        <authorList>
            <consortium name="The MGC Project Team"/>
        </authorList>
    </citation>
    <scope>NUCLEOTIDE SEQUENCE [LARGE SCALE MRNA]</scope>
    <source>
        <tissue>Brain</tissue>
        <tissue>Kidney</tissue>
    </source>
</reference>
<reference key="8">
    <citation type="journal article" date="2005" name="J. Biol. Chem.">
        <title>Functional characterization of the MENTAL domain.</title>
        <authorList>
            <person name="Alpy F."/>
            <person name="Latchumanan V.K."/>
            <person name="Kedinger V."/>
            <person name="Janoshazi A."/>
            <person name="Thiele C."/>
            <person name="Wendling C."/>
            <person name="Rio M.C."/>
            <person name="Tomasetto C."/>
        </authorList>
    </citation>
    <scope>SUBUNIT</scope>
    <scope>INTERACTION WITH STARD3NL</scope>
    <scope>DOMAIN</scope>
</reference>
<reference key="9">
    <citation type="journal article" date="2006" name="Biochem. Soc. Trans.">
        <title>MLN64 and MENTHO, two mediators of endosomal cholesterol transport.</title>
        <authorList>
            <person name="Alpy F."/>
            <person name="Tomasetto C."/>
        </authorList>
    </citation>
    <scope>SUBUNIT</scope>
    <scope>INTERACTION WITH STARD3</scope>
</reference>
<reference key="10">
    <citation type="journal article" date="2008" name="J. Proteome Res.">
        <title>Phosphoproteome of resting human platelets.</title>
        <authorList>
            <person name="Zahedi R.P."/>
            <person name="Lewandrowski U."/>
            <person name="Wiesner J."/>
            <person name="Wortelkamp S."/>
            <person name="Moebius J."/>
            <person name="Schuetz C."/>
            <person name="Walter U."/>
            <person name="Gambaryan S."/>
            <person name="Sickmann A."/>
        </authorList>
    </citation>
    <scope>IDENTIFICATION BY MASS SPECTROMETRY [LARGE SCALE ANALYSIS]</scope>
    <source>
        <tissue>Platelet</tissue>
    </source>
</reference>
<reference key="11">
    <citation type="journal article" date="2009" name="Sci. Signal.">
        <title>Quantitative phosphoproteomic analysis of T cell receptor signaling reveals system-wide modulation of protein-protein interactions.</title>
        <authorList>
            <person name="Mayya V."/>
            <person name="Lundgren D.H."/>
            <person name="Hwang S.-I."/>
            <person name="Rezaul K."/>
            <person name="Wu L."/>
            <person name="Eng J.K."/>
            <person name="Rodionov V."/>
            <person name="Han D.K."/>
        </authorList>
    </citation>
    <scope>PHOSPHORYLATION [LARGE SCALE ANALYSIS] AT SER-193</scope>
    <scope>IDENTIFICATION BY MASS SPECTROMETRY [LARGE SCALE ANALYSIS]</scope>
    <source>
        <tissue>Leukemic T-cell</tissue>
    </source>
</reference>
<reference key="12">
    <citation type="journal article" date="2010" name="Sci. Signal.">
        <title>Quantitative phosphoproteomics reveals widespread full phosphorylation site occupancy during mitosis.</title>
        <authorList>
            <person name="Olsen J.V."/>
            <person name="Vermeulen M."/>
            <person name="Santamaria A."/>
            <person name="Kumar C."/>
            <person name="Miller M.L."/>
            <person name="Jensen L.J."/>
            <person name="Gnad F."/>
            <person name="Cox J."/>
            <person name="Jensen T.S."/>
            <person name="Nigg E.A."/>
            <person name="Brunak S."/>
            <person name="Mann M."/>
        </authorList>
    </citation>
    <scope>ACETYLATION [LARGE SCALE ANALYSIS] AT MET-1</scope>
    <scope>PHOSPHORYLATION [LARGE SCALE ANALYSIS] AT SER-21</scope>
    <scope>IDENTIFICATION BY MASS SPECTROMETRY [LARGE SCALE ANALYSIS]</scope>
    <source>
        <tissue>Cervix carcinoma</tissue>
    </source>
</reference>
<reference key="13">
    <citation type="journal article" date="2013" name="J. Cell Sci.">
        <title>STARD3 or STARD3NL and VAP form a novel molecular tether between late endosomes and the ER.</title>
        <authorList>
            <person name="Alpy F."/>
            <person name="Rousseau A."/>
            <person name="Schwab Y."/>
            <person name="Legueux F."/>
            <person name="Stoll I."/>
            <person name="Wendling C."/>
            <person name="Spiegelhalter C."/>
            <person name="Kessler P."/>
            <person name="Mathelin C."/>
            <person name="Rio M.C."/>
            <person name="Levine T.P."/>
            <person name="Tomasetto C."/>
        </authorList>
    </citation>
    <scope>FUNCTION</scope>
    <scope>SUBCELLULAR LOCATION</scope>
    <scope>INTERACTION WITH VAPA AND VAPB</scope>
    <scope>FFAT MOTIF</scope>
</reference>
<reference key="14">
    <citation type="journal article" date="2013" name="J. Proteome Res.">
        <title>Toward a comprehensive characterization of a human cancer cell phosphoproteome.</title>
        <authorList>
            <person name="Zhou H."/>
            <person name="Di Palma S."/>
            <person name="Preisinger C."/>
            <person name="Peng M."/>
            <person name="Polat A.N."/>
            <person name="Heck A.J."/>
            <person name="Mohammed S."/>
        </authorList>
    </citation>
    <scope>PHOSPHORYLATION [LARGE SCALE ANALYSIS] AT SER-15; SER-27 AND SER-193</scope>
    <scope>IDENTIFICATION BY MASS SPECTROMETRY [LARGE SCALE ANALYSIS]</scope>
    <source>
        <tissue>Cervix carcinoma</tissue>
        <tissue>Erythroleukemia</tissue>
    </source>
</reference>
<reference key="15">
    <citation type="journal article" date="2014" name="J. Proteomics">
        <title>An enzyme assisted RP-RPLC approach for in-depth analysis of human liver phosphoproteome.</title>
        <authorList>
            <person name="Bian Y."/>
            <person name="Song C."/>
            <person name="Cheng K."/>
            <person name="Dong M."/>
            <person name="Wang F."/>
            <person name="Huang J."/>
            <person name="Sun D."/>
            <person name="Wang L."/>
            <person name="Ye M."/>
            <person name="Zou H."/>
        </authorList>
    </citation>
    <scope>PHOSPHORYLATION [LARGE SCALE ANALYSIS] AT SER-193</scope>
    <scope>IDENTIFICATION BY MASS SPECTROMETRY [LARGE SCALE ANALYSIS]</scope>
    <source>
        <tissue>Liver</tissue>
    </source>
</reference>
<reference key="16">
    <citation type="journal article" date="2018" name="EMBO Rep.">
        <title>Identification of MOSPD2, a novel scaffold for endoplasmic reticulum membrane contact sites.</title>
        <authorList>
            <person name="Di Mattia T."/>
            <person name="Wilhelm L.P."/>
            <person name="Ikhlef S."/>
            <person name="Wendling C."/>
            <person name="Spehner D."/>
            <person name="Nomine Y."/>
            <person name="Giordano F."/>
            <person name="Mathelin C."/>
            <person name="Drin G."/>
            <person name="Tomasetto C."/>
            <person name="Alpy F."/>
        </authorList>
    </citation>
    <scope>IDENTIFICATION BY MASS SPECTROMETRY</scope>
    <scope>INTERACTION WITH MOSPD2</scope>
    <scope>SUBCELLULAR LOCATION</scope>
    <scope>DOMAIN</scope>
    <scope>FFAT MOTIF</scope>
    <scope>MUTAGENESIS OF 209-TYR--LEU-234</scope>
</reference>
<accession>O95772</accession>
<accession>A4D1X0</accession>
<proteinExistence type="evidence at protein level"/>
<sequence>MNHLPEDMENALTGSQSSHASLRNIHSINPTQLMARIESYEGREKKGISDVRRTFCLFVTFDLLFVTLLWIIELNVNGGIENTLEKEVMQYDYYSSYFDIFLLAVFRFKVLILAYAVCRLRHWWAIALTTAVTSAFLLAKVILSKLFSQGAFGYVLPIISFILAWIETWFLDFKVLPQEAEEENRLLIVQDASERAALIPGGLSDGQFYSPPESEAGSEEAEEKQDSEKPLLEL</sequence>
<keyword id="KW-0007">Acetylation</keyword>
<keyword id="KW-0024">Alternative initiation</keyword>
<keyword id="KW-0967">Endosome</keyword>
<keyword id="KW-0472">Membrane</keyword>
<keyword id="KW-0597">Phosphoprotein</keyword>
<keyword id="KW-1267">Proteomics identification</keyword>
<keyword id="KW-1185">Reference proteome</keyword>
<keyword id="KW-0812">Transmembrane</keyword>
<keyword id="KW-1133">Transmembrane helix</keyword>
<comment type="function">
    <text evidence="7">Tethering protein that creates contact site between the endoplasmic reticulum and late endosomes: localizes to late endosome membranes and contacts the endoplasmic reticulum via interaction with VAPA and VAPB (PubMed:24105263).</text>
</comment>
<comment type="subunit">
    <text evidence="6 7 8">Homodimer (PubMed:16709157). Interacts (via the MENTAL domain) with STARD3NL (PubMed:16709157). Interacts (via FFAT motif) with VAPA. Interacts (via FFAT motif) with VAPB (PubMed:24105263). Interacts (via FFAT motif) with MOSPD2 (via MSP domain) (PubMed:29858488).</text>
</comment>
<comment type="interaction">
    <interactant intactId="EBI-3916943">
        <id>O95772</id>
    </interactant>
    <interactant intactId="EBI-2801937">
        <id>Q9UBK5</id>
        <label>HCST</label>
    </interactant>
    <organismsDiffer>false</organismsDiffer>
    <experiments>3</experiments>
</comment>
<comment type="interaction">
    <interactant intactId="EBI-3916943">
        <id>O95772</id>
    </interactant>
    <interactant intactId="EBI-2812848">
        <id>Q8NHP6</id>
        <label>MOSPD2</label>
    </interactant>
    <organismsDiffer>false</organismsDiffer>
    <experiments>6</experiments>
</comment>
<comment type="subcellular location">
    <subcellularLocation>
        <location evidence="7 8">Late endosome membrane</location>
        <topology evidence="2">Multi-pass membrane protein</topology>
    </subcellularLocation>
    <text evidence="7">Localizes to contact sites between the endoplasmic reticulum and late endosomes: associates with the endoplasmic reticulum membrane via interaction with VAPA, VAPB or MOSPD2.</text>
</comment>
<comment type="alternative products">
    <event type="alternative initiation"/>
    <isoform>
        <id>O95772-1</id>
        <name>1</name>
        <sequence type="displayed"/>
    </isoform>
    <isoform>
        <id>O95772-2</id>
        <name>2</name>
        <sequence type="described" ref="VSP_018819"/>
    </isoform>
</comment>
<comment type="domain">
    <text evidence="8">The FFAT motif mediates interaction with VAPA, VAPB and MOSPD2.</text>
</comment>
<comment type="domain">
    <text evidence="1 5 6">The MENTAL domain anchors the protein in endosome membranes and exposes the START domain in the cytosol (By similarity). It binds cholesterol and mediates homotypic as well as heterotypic interactions between STARD3 and STARD3NL (PubMed:15718238, PubMed:16709157).</text>
</comment>
<comment type="similarity">
    <text evidence="11">Belongs to the STARD3 family.</text>
</comment>
<dbReference type="EMBL" id="AJ492267">
    <property type="protein sequence ID" value="CAD37353.1"/>
    <property type="molecule type" value="mRNA"/>
</dbReference>
<dbReference type="EMBL" id="AY358645">
    <property type="protein sequence ID" value="AAQ89008.1"/>
    <property type="molecule type" value="mRNA"/>
</dbReference>
<dbReference type="EMBL" id="AK315404">
    <property type="protein sequence ID" value="BAG37796.1"/>
    <property type="molecule type" value="mRNA"/>
</dbReference>
<dbReference type="EMBL" id="AC006033">
    <property type="protein sequence ID" value="AAS07552.1"/>
    <property type="molecule type" value="Genomic_DNA"/>
</dbReference>
<dbReference type="EMBL" id="CH236951">
    <property type="protein sequence ID" value="EAL23983.1"/>
    <property type="molecule type" value="Genomic_DNA"/>
</dbReference>
<dbReference type="EMBL" id="CH471073">
    <property type="protein sequence ID" value="EAW94088.1"/>
    <property type="molecule type" value="Genomic_DNA"/>
</dbReference>
<dbReference type="EMBL" id="BC003074">
    <property type="protein sequence ID" value="AAH03074.1"/>
    <property type="molecule type" value="mRNA"/>
</dbReference>
<dbReference type="EMBL" id="BC005959">
    <property type="protein sequence ID" value="AAH05959.1"/>
    <property type="molecule type" value="mRNA"/>
</dbReference>
<dbReference type="CCDS" id="CCDS5455.1">
    <molecule id="O95772-1"/>
</dbReference>
<dbReference type="RefSeq" id="NP_001350268.1">
    <molecule id="O95772-1"/>
    <property type="nucleotide sequence ID" value="NM_001363339.2"/>
</dbReference>
<dbReference type="RefSeq" id="NP_001350269.1">
    <molecule id="O95772-1"/>
    <property type="nucleotide sequence ID" value="NM_001363340.2"/>
</dbReference>
<dbReference type="RefSeq" id="NP_114405.1">
    <molecule id="O95772-1"/>
    <property type="nucleotide sequence ID" value="NM_032016.4"/>
</dbReference>
<dbReference type="RefSeq" id="XP_005249937.1">
    <property type="nucleotide sequence ID" value="XM_005249880.1"/>
</dbReference>
<dbReference type="RefSeq" id="XP_011513874.1">
    <molecule id="O95772-1"/>
    <property type="nucleotide sequence ID" value="XM_011515572.2"/>
</dbReference>
<dbReference type="RefSeq" id="XP_016868181.1">
    <property type="nucleotide sequence ID" value="XM_017012692.1"/>
</dbReference>
<dbReference type="RefSeq" id="XP_016868182.1">
    <molecule id="O95772-1"/>
    <property type="nucleotide sequence ID" value="XM_017012693.2"/>
</dbReference>
<dbReference type="RefSeq" id="XP_016868183.1">
    <property type="nucleotide sequence ID" value="XM_017012694.1"/>
</dbReference>
<dbReference type="RefSeq" id="XP_024302723.1">
    <molecule id="O95772-1"/>
    <property type="nucleotide sequence ID" value="XM_024446955.2"/>
</dbReference>
<dbReference type="RefSeq" id="XP_047276876.1">
    <molecule id="O95772-1"/>
    <property type="nucleotide sequence ID" value="XM_047420920.1"/>
</dbReference>
<dbReference type="RefSeq" id="XP_054215145.1">
    <molecule id="O95772-1"/>
    <property type="nucleotide sequence ID" value="XM_054359170.1"/>
</dbReference>
<dbReference type="RefSeq" id="XP_054215146.1">
    <molecule id="O95772-1"/>
    <property type="nucleotide sequence ID" value="XM_054359171.1"/>
</dbReference>
<dbReference type="RefSeq" id="XP_054215147.1">
    <molecule id="O95772-1"/>
    <property type="nucleotide sequence ID" value="XM_054359172.1"/>
</dbReference>
<dbReference type="RefSeq" id="XP_054215148.1">
    <molecule id="O95772-1"/>
    <property type="nucleotide sequence ID" value="XM_054359173.1"/>
</dbReference>
<dbReference type="RefSeq" id="XP_054215149.1">
    <molecule id="O95772-1"/>
    <property type="nucleotide sequence ID" value="XM_054359174.1"/>
</dbReference>
<dbReference type="BioGRID" id="123815">
    <property type="interactions" value="69"/>
</dbReference>
<dbReference type="FunCoup" id="O95772">
    <property type="interactions" value="1050"/>
</dbReference>
<dbReference type="IntAct" id="O95772">
    <property type="interactions" value="50"/>
</dbReference>
<dbReference type="MINT" id="O95772"/>
<dbReference type="STRING" id="9606.ENSP00000009041"/>
<dbReference type="TCDB" id="8.A.120.2.3">
    <property type="family name" value="the mitochondrial star-related lipid transfer protein (star) family"/>
</dbReference>
<dbReference type="iPTMnet" id="O95772"/>
<dbReference type="PhosphoSitePlus" id="O95772"/>
<dbReference type="SwissPalm" id="O95772"/>
<dbReference type="BioMuta" id="STARD3NL"/>
<dbReference type="CPTAC" id="CPTAC-1196"/>
<dbReference type="CPTAC" id="CPTAC-1197"/>
<dbReference type="jPOST" id="O95772"/>
<dbReference type="MassIVE" id="O95772"/>
<dbReference type="PaxDb" id="9606-ENSP00000009041"/>
<dbReference type="PeptideAtlas" id="O95772"/>
<dbReference type="ProteomicsDB" id="51038">
    <molecule id="O95772-1"/>
</dbReference>
<dbReference type="ProteomicsDB" id="51039">
    <molecule id="O95772-2"/>
</dbReference>
<dbReference type="Pumba" id="O95772"/>
<dbReference type="Antibodypedia" id="3121">
    <property type="antibodies" value="31 antibodies from 17 providers"/>
</dbReference>
<dbReference type="DNASU" id="83930"/>
<dbReference type="Ensembl" id="ENST00000009041.12">
    <molecule id="O95772-1"/>
    <property type="protein sequence ID" value="ENSP00000009041.7"/>
    <property type="gene ID" value="ENSG00000010270.14"/>
</dbReference>
<dbReference type="Ensembl" id="ENST00000396013.5">
    <molecule id="O95772-1"/>
    <property type="protein sequence ID" value="ENSP00000379334.1"/>
    <property type="gene ID" value="ENSG00000010270.14"/>
</dbReference>
<dbReference type="GeneID" id="83930"/>
<dbReference type="KEGG" id="hsa:83930"/>
<dbReference type="MANE-Select" id="ENST00000009041.12">
    <property type="protein sequence ID" value="ENSP00000009041.7"/>
    <property type="RefSeq nucleotide sequence ID" value="NM_032016.4"/>
    <property type="RefSeq protein sequence ID" value="NP_114405.1"/>
</dbReference>
<dbReference type="UCSC" id="uc003tfr.4">
    <molecule id="O95772-1"/>
    <property type="organism name" value="human"/>
</dbReference>
<dbReference type="AGR" id="HGNC:19169"/>
<dbReference type="CTD" id="83930"/>
<dbReference type="DisGeNET" id="83930"/>
<dbReference type="GeneCards" id="STARD3NL"/>
<dbReference type="HGNC" id="HGNC:19169">
    <property type="gene designation" value="STARD3NL"/>
</dbReference>
<dbReference type="HPA" id="ENSG00000010270">
    <property type="expression patterns" value="Low tissue specificity"/>
</dbReference>
<dbReference type="MIM" id="611759">
    <property type="type" value="gene"/>
</dbReference>
<dbReference type="neXtProt" id="NX_O95772"/>
<dbReference type="OpenTargets" id="ENSG00000010270"/>
<dbReference type="PharmGKB" id="PA134990065"/>
<dbReference type="VEuPathDB" id="HostDB:ENSG00000010270"/>
<dbReference type="eggNOG" id="KOG3845">
    <property type="taxonomic scope" value="Eukaryota"/>
</dbReference>
<dbReference type="GeneTree" id="ENSGT00940000155476"/>
<dbReference type="InParanoid" id="O95772"/>
<dbReference type="OMA" id="HWWAVAI"/>
<dbReference type="OrthoDB" id="5912992at2759"/>
<dbReference type="PAN-GO" id="O95772">
    <property type="GO annotations" value="6 GO annotations based on evolutionary models"/>
</dbReference>
<dbReference type="PhylomeDB" id="O95772"/>
<dbReference type="TreeFam" id="TF313869"/>
<dbReference type="PathwayCommons" id="O95772"/>
<dbReference type="Reactome" id="R-HSA-196108">
    <property type="pathway name" value="Pregnenolone biosynthesis"/>
</dbReference>
<dbReference type="SignaLink" id="O95772"/>
<dbReference type="BioGRID-ORCS" id="83930">
    <property type="hits" value="15 hits in 1153 CRISPR screens"/>
</dbReference>
<dbReference type="ChiTaRS" id="STARD3NL">
    <property type="organism name" value="human"/>
</dbReference>
<dbReference type="GeneWiki" id="STARD3NL"/>
<dbReference type="GenomeRNAi" id="83930"/>
<dbReference type="Pharos" id="O95772">
    <property type="development level" value="Tbio"/>
</dbReference>
<dbReference type="PRO" id="PR:O95772"/>
<dbReference type="Proteomes" id="UP000005640">
    <property type="component" value="Chromosome 7"/>
</dbReference>
<dbReference type="RNAct" id="O95772">
    <property type="molecule type" value="protein"/>
</dbReference>
<dbReference type="Bgee" id="ENSG00000010270">
    <property type="expression patterns" value="Expressed in secondary oocyte and 188 other cell types or tissues"/>
</dbReference>
<dbReference type="ExpressionAtlas" id="O95772">
    <property type="expression patterns" value="baseline and differential"/>
</dbReference>
<dbReference type="GO" id="GO:0005829">
    <property type="term" value="C:cytosol"/>
    <property type="evidence" value="ECO:0000304"/>
    <property type="project" value="Reactome"/>
</dbReference>
<dbReference type="GO" id="GO:0140284">
    <property type="term" value="C:endoplasmic reticulum-endosome membrane contact site"/>
    <property type="evidence" value="ECO:0000314"/>
    <property type="project" value="UniProtKB"/>
</dbReference>
<dbReference type="GO" id="GO:0005768">
    <property type="term" value="C:endosome"/>
    <property type="evidence" value="ECO:0000314"/>
    <property type="project" value="UniProtKB"/>
</dbReference>
<dbReference type="GO" id="GO:0043231">
    <property type="term" value="C:intracellular membrane-bounded organelle"/>
    <property type="evidence" value="ECO:0000314"/>
    <property type="project" value="HPA"/>
</dbReference>
<dbReference type="GO" id="GO:0031902">
    <property type="term" value="C:late endosome membrane"/>
    <property type="evidence" value="ECO:0000314"/>
    <property type="project" value="UniProtKB"/>
</dbReference>
<dbReference type="GO" id="GO:0005765">
    <property type="term" value="C:lysosomal membrane"/>
    <property type="evidence" value="ECO:0007005"/>
    <property type="project" value="UniProtKB"/>
</dbReference>
<dbReference type="GO" id="GO:0016020">
    <property type="term" value="C:membrane"/>
    <property type="evidence" value="ECO:0007005"/>
    <property type="project" value="UniProtKB"/>
</dbReference>
<dbReference type="GO" id="GO:0044232">
    <property type="term" value="C:organelle membrane contact site"/>
    <property type="evidence" value="ECO:0000314"/>
    <property type="project" value="UniProtKB"/>
</dbReference>
<dbReference type="GO" id="GO:0015485">
    <property type="term" value="F:cholesterol binding"/>
    <property type="evidence" value="ECO:0000314"/>
    <property type="project" value="UniProtKB"/>
</dbReference>
<dbReference type="GO" id="GO:0042803">
    <property type="term" value="F:protein homodimerization activity"/>
    <property type="evidence" value="ECO:0000314"/>
    <property type="project" value="UniProtKB"/>
</dbReference>
<dbReference type="GO" id="GO:0030301">
    <property type="term" value="P:cholesterol transport"/>
    <property type="evidence" value="ECO:0000318"/>
    <property type="project" value="GO_Central"/>
</dbReference>
<dbReference type="GO" id="GO:0099044">
    <property type="term" value="P:vesicle tethering to endoplasmic reticulum"/>
    <property type="evidence" value="ECO:0000314"/>
    <property type="project" value="UniProtKB"/>
</dbReference>
<dbReference type="InterPro" id="IPR019498">
    <property type="entry name" value="MENTAL"/>
</dbReference>
<dbReference type="InterPro" id="IPR051869">
    <property type="entry name" value="STARD3"/>
</dbReference>
<dbReference type="PANTHER" id="PTHR46121:SF1">
    <property type="entry name" value="STARD3 N-TERMINAL-LIKE PROTEIN"/>
    <property type="match status" value="1"/>
</dbReference>
<dbReference type="PANTHER" id="PTHR46121">
    <property type="entry name" value="STEROIDOGENIC ACUTE REGULATORY PROTEIN-LIKE"/>
    <property type="match status" value="1"/>
</dbReference>
<dbReference type="Pfam" id="PF10457">
    <property type="entry name" value="MENTAL"/>
    <property type="match status" value="1"/>
</dbReference>
<dbReference type="PROSITE" id="PS51439">
    <property type="entry name" value="MENTAL"/>
    <property type="match status" value="1"/>
</dbReference>
<organism>
    <name type="scientific">Homo sapiens</name>
    <name type="common">Human</name>
    <dbReference type="NCBI Taxonomy" id="9606"/>
    <lineage>
        <taxon>Eukaryota</taxon>
        <taxon>Metazoa</taxon>
        <taxon>Chordata</taxon>
        <taxon>Craniata</taxon>
        <taxon>Vertebrata</taxon>
        <taxon>Euteleostomi</taxon>
        <taxon>Mammalia</taxon>
        <taxon>Eutheria</taxon>
        <taxon>Euarchontoglires</taxon>
        <taxon>Primates</taxon>
        <taxon>Haplorrhini</taxon>
        <taxon>Catarrhini</taxon>
        <taxon>Hominidae</taxon>
        <taxon>Homo</taxon>
    </lineage>
</organism>
<name>STR3N_HUMAN</name>
<evidence type="ECO:0000250" key="1">
    <source>
        <dbReference type="UniProtKB" id="Q14849"/>
    </source>
</evidence>
<evidence type="ECO:0000255" key="2"/>
<evidence type="ECO:0000255" key="3">
    <source>
        <dbReference type="PROSITE-ProRule" id="PRU00770"/>
    </source>
</evidence>
<evidence type="ECO:0000256" key="4">
    <source>
        <dbReference type="SAM" id="MobiDB-lite"/>
    </source>
</evidence>
<evidence type="ECO:0000269" key="5">
    <source>
    </source>
</evidence>
<evidence type="ECO:0000269" key="6">
    <source>
    </source>
</evidence>
<evidence type="ECO:0000269" key="7">
    <source>
    </source>
</evidence>
<evidence type="ECO:0000269" key="8">
    <source>
    </source>
</evidence>
<evidence type="ECO:0000303" key="9">
    <source>
    </source>
</evidence>
<evidence type="ECO:0000303" key="10">
    <source>
    </source>
</evidence>
<evidence type="ECO:0000305" key="11"/>
<evidence type="ECO:0000305" key="12">
    <source>
    </source>
</evidence>
<evidence type="ECO:0000312" key="13">
    <source>
        <dbReference type="HGNC" id="HGNC:19169"/>
    </source>
</evidence>
<evidence type="ECO:0007744" key="14">
    <source>
    </source>
</evidence>
<evidence type="ECO:0007744" key="15">
    <source>
    </source>
</evidence>
<evidence type="ECO:0007744" key="16">
    <source>
    </source>
</evidence>
<evidence type="ECO:0007744" key="17">
    <source>
    </source>
</evidence>
<feature type="chain" id="PRO_0000021666" description="STARD3 N-terminal-like protein">
    <location>
        <begin position="1"/>
        <end position="234"/>
    </location>
</feature>
<feature type="topological domain" description="Cytoplasmic" evidence="12">
    <location>
        <begin position="1"/>
        <end position="53"/>
    </location>
</feature>
<feature type="transmembrane region" description="Helical" evidence="3">
    <location>
        <begin position="54"/>
        <end position="74"/>
    </location>
</feature>
<feature type="topological domain" description="Extracellular" evidence="2">
    <location>
        <begin position="75"/>
        <end position="97"/>
    </location>
</feature>
<feature type="transmembrane region" description="Helical" evidence="3">
    <location>
        <begin position="98"/>
        <end position="118"/>
    </location>
</feature>
<feature type="topological domain" description="Cytoplasmic" evidence="2">
    <location>
        <begin position="119"/>
        <end position="122"/>
    </location>
</feature>
<feature type="transmembrane region" description="Helical" evidence="3">
    <location>
        <begin position="123"/>
        <end position="143"/>
    </location>
</feature>
<feature type="topological domain" description="Extracellular" evidence="2">
    <location>
        <begin position="144"/>
        <end position="150"/>
    </location>
</feature>
<feature type="transmembrane region" description="Helical" evidence="3">
    <location>
        <begin position="151"/>
        <end position="171"/>
    </location>
</feature>
<feature type="topological domain" description="Cytoplasmic" evidence="12">
    <location>
        <begin position="172"/>
        <end position="234"/>
    </location>
</feature>
<feature type="domain" description="MENTAL" evidence="3">
    <location>
        <begin position="48"/>
        <end position="218"/>
    </location>
</feature>
<feature type="region of interest" description="Disordered" evidence="4">
    <location>
        <begin position="200"/>
        <end position="234"/>
    </location>
</feature>
<feature type="short sequence motif" description="FFAT" evidence="7 8">
    <location>
        <begin position="208"/>
        <end position="213"/>
    </location>
</feature>
<feature type="compositionally biased region" description="Basic and acidic residues" evidence="4">
    <location>
        <begin position="224"/>
        <end position="234"/>
    </location>
</feature>
<feature type="modified residue" description="N-acetylmethionine" evidence="15">
    <location>
        <position position="1"/>
    </location>
</feature>
<feature type="modified residue" description="Phosphoserine" evidence="16">
    <location>
        <position position="15"/>
    </location>
</feature>
<feature type="modified residue" description="Phosphoserine" evidence="15">
    <location>
        <position position="21"/>
    </location>
</feature>
<feature type="modified residue" description="Phosphoserine" evidence="16">
    <location>
        <position position="27"/>
    </location>
</feature>
<feature type="modified residue" description="Phosphoserine" evidence="14 16 17">
    <location>
        <position position="193"/>
    </location>
</feature>
<feature type="splice variant" id="VSP_018819" description="In isoform 2." evidence="11">
    <location>
        <begin position="1"/>
        <end position="7"/>
    </location>
</feature>
<feature type="mutagenesis site" description="Loss of interaction with MOSPD2." evidence="8">
    <location>
        <begin position="209"/>
        <end position="234"/>
    </location>
</feature>
<protein>
    <recommendedName>
        <fullName evidence="10">STARD3 N-terminal-like protein</fullName>
    </recommendedName>
    <alternativeName>
        <fullName>MLN64 N-terminal domain homolog</fullName>
    </alternativeName>
</protein>